<organism>
    <name type="scientific">Bradyrhizobium sp. (strain BTAi1 / ATCC BAA-1182)</name>
    <dbReference type="NCBI Taxonomy" id="288000"/>
    <lineage>
        <taxon>Bacteria</taxon>
        <taxon>Pseudomonadati</taxon>
        <taxon>Pseudomonadota</taxon>
        <taxon>Alphaproteobacteria</taxon>
        <taxon>Hyphomicrobiales</taxon>
        <taxon>Nitrobacteraceae</taxon>
        <taxon>Bradyrhizobium</taxon>
    </lineage>
</organism>
<accession>A5ERJ9</accession>
<name>RUVB_BRASB</name>
<reference key="1">
    <citation type="journal article" date="2007" name="Science">
        <title>Legumes symbioses: absence of nod genes in photosynthetic bradyrhizobia.</title>
        <authorList>
            <person name="Giraud E."/>
            <person name="Moulin L."/>
            <person name="Vallenet D."/>
            <person name="Barbe V."/>
            <person name="Cytryn E."/>
            <person name="Avarre J.-C."/>
            <person name="Jaubert M."/>
            <person name="Simon D."/>
            <person name="Cartieaux F."/>
            <person name="Prin Y."/>
            <person name="Bena G."/>
            <person name="Hannibal L."/>
            <person name="Fardoux J."/>
            <person name="Kojadinovic M."/>
            <person name="Vuillet L."/>
            <person name="Lajus A."/>
            <person name="Cruveiller S."/>
            <person name="Rouy Z."/>
            <person name="Mangenot S."/>
            <person name="Segurens B."/>
            <person name="Dossat C."/>
            <person name="Franck W.L."/>
            <person name="Chang W.-S."/>
            <person name="Saunders E."/>
            <person name="Bruce D."/>
            <person name="Richardson P."/>
            <person name="Normand P."/>
            <person name="Dreyfus B."/>
            <person name="Pignol D."/>
            <person name="Stacey G."/>
            <person name="Emerich D."/>
            <person name="Vermeglio A."/>
            <person name="Medigue C."/>
            <person name="Sadowsky M."/>
        </authorList>
    </citation>
    <scope>NUCLEOTIDE SEQUENCE [LARGE SCALE GENOMIC DNA]</scope>
    <source>
        <strain>BTAi1 / ATCC BAA-1182</strain>
    </source>
</reference>
<feature type="chain" id="PRO_0000322787" description="Holliday junction branch migration complex subunit RuvB">
    <location>
        <begin position="1"/>
        <end position="348"/>
    </location>
</feature>
<feature type="region of interest" description="Large ATPase domain (RuvB-L)" evidence="1">
    <location>
        <begin position="1"/>
        <end position="183"/>
    </location>
</feature>
<feature type="region of interest" description="Disordered" evidence="2">
    <location>
        <begin position="1"/>
        <end position="20"/>
    </location>
</feature>
<feature type="region of interest" description="Small ATPAse domain (RuvB-S)" evidence="1">
    <location>
        <begin position="184"/>
        <end position="254"/>
    </location>
</feature>
<feature type="region of interest" description="Head domain (RuvB-H)" evidence="1">
    <location>
        <begin position="257"/>
        <end position="348"/>
    </location>
</feature>
<feature type="binding site" evidence="1">
    <location>
        <position position="22"/>
    </location>
    <ligand>
        <name>ATP</name>
        <dbReference type="ChEBI" id="CHEBI:30616"/>
    </ligand>
</feature>
<feature type="binding site" evidence="1">
    <location>
        <position position="23"/>
    </location>
    <ligand>
        <name>ATP</name>
        <dbReference type="ChEBI" id="CHEBI:30616"/>
    </ligand>
</feature>
<feature type="binding site" evidence="1">
    <location>
        <position position="64"/>
    </location>
    <ligand>
        <name>ATP</name>
        <dbReference type="ChEBI" id="CHEBI:30616"/>
    </ligand>
</feature>
<feature type="binding site" evidence="1">
    <location>
        <position position="67"/>
    </location>
    <ligand>
        <name>ATP</name>
        <dbReference type="ChEBI" id="CHEBI:30616"/>
    </ligand>
</feature>
<feature type="binding site" evidence="1">
    <location>
        <position position="68"/>
    </location>
    <ligand>
        <name>ATP</name>
        <dbReference type="ChEBI" id="CHEBI:30616"/>
    </ligand>
</feature>
<feature type="binding site" evidence="1">
    <location>
        <position position="68"/>
    </location>
    <ligand>
        <name>Mg(2+)</name>
        <dbReference type="ChEBI" id="CHEBI:18420"/>
    </ligand>
</feature>
<feature type="binding site" evidence="1">
    <location>
        <position position="69"/>
    </location>
    <ligand>
        <name>ATP</name>
        <dbReference type="ChEBI" id="CHEBI:30616"/>
    </ligand>
</feature>
<feature type="binding site" evidence="1">
    <location>
        <begin position="130"/>
        <end position="132"/>
    </location>
    <ligand>
        <name>ATP</name>
        <dbReference type="ChEBI" id="CHEBI:30616"/>
    </ligand>
</feature>
<feature type="binding site" evidence="1">
    <location>
        <position position="173"/>
    </location>
    <ligand>
        <name>ATP</name>
        <dbReference type="ChEBI" id="CHEBI:30616"/>
    </ligand>
</feature>
<feature type="binding site" evidence="1">
    <location>
        <position position="183"/>
    </location>
    <ligand>
        <name>ATP</name>
        <dbReference type="ChEBI" id="CHEBI:30616"/>
    </ligand>
</feature>
<feature type="binding site" evidence="1">
    <location>
        <position position="220"/>
    </location>
    <ligand>
        <name>ATP</name>
        <dbReference type="ChEBI" id="CHEBI:30616"/>
    </ligand>
</feature>
<feature type="binding site" evidence="1">
    <location>
        <position position="293"/>
    </location>
    <ligand>
        <name>DNA</name>
        <dbReference type="ChEBI" id="CHEBI:16991"/>
    </ligand>
</feature>
<feature type="binding site" evidence="1">
    <location>
        <position position="312"/>
    </location>
    <ligand>
        <name>DNA</name>
        <dbReference type="ChEBI" id="CHEBI:16991"/>
    </ligand>
</feature>
<feature type="binding site" evidence="1">
    <location>
        <position position="317"/>
    </location>
    <ligand>
        <name>DNA</name>
        <dbReference type="ChEBI" id="CHEBI:16991"/>
    </ligand>
</feature>
<comment type="function">
    <text evidence="1">The RuvA-RuvB-RuvC complex processes Holliday junction (HJ) DNA during genetic recombination and DNA repair, while the RuvA-RuvB complex plays an important role in the rescue of blocked DNA replication forks via replication fork reversal (RFR). RuvA specifically binds to HJ cruciform DNA, conferring on it an open structure. The RuvB hexamer acts as an ATP-dependent pump, pulling dsDNA into and through the RuvAB complex. RuvB forms 2 homohexamers on either side of HJ DNA bound by 1 or 2 RuvA tetramers; 4 subunits per hexamer contact DNA at a time. Coordinated motions by a converter formed by DNA-disengaged RuvB subunits stimulates ATP hydrolysis and nucleotide exchange. Immobilization of the converter enables RuvB to convert the ATP-contained energy into a lever motion, pulling 2 nucleotides of DNA out of the RuvA tetramer per ATP hydrolyzed, thus driving DNA branch migration. The RuvB motors rotate together with the DNA substrate, which together with the progressing nucleotide cycle form the mechanistic basis for DNA recombination by continuous HJ branch migration. Branch migration allows RuvC to scan DNA until it finds its consensus sequence, where it cleaves and resolves cruciform DNA.</text>
</comment>
<comment type="catalytic activity">
    <reaction evidence="1">
        <text>ATP + H2O = ADP + phosphate + H(+)</text>
        <dbReference type="Rhea" id="RHEA:13065"/>
        <dbReference type="ChEBI" id="CHEBI:15377"/>
        <dbReference type="ChEBI" id="CHEBI:15378"/>
        <dbReference type="ChEBI" id="CHEBI:30616"/>
        <dbReference type="ChEBI" id="CHEBI:43474"/>
        <dbReference type="ChEBI" id="CHEBI:456216"/>
    </reaction>
</comment>
<comment type="subunit">
    <text evidence="1">Homohexamer. Forms an RuvA(8)-RuvB(12)-Holliday junction (HJ) complex. HJ DNA is sandwiched between 2 RuvA tetramers; dsDNA enters through RuvA and exits via RuvB. An RuvB hexamer assembles on each DNA strand where it exits the tetramer. Each RuvB hexamer is contacted by two RuvA subunits (via domain III) on 2 adjacent RuvB subunits; this complex drives branch migration. In the full resolvosome a probable DNA-RuvA(4)-RuvB(12)-RuvC(2) complex forms which resolves the HJ.</text>
</comment>
<comment type="subcellular location">
    <subcellularLocation>
        <location evidence="1">Cytoplasm</location>
    </subcellularLocation>
</comment>
<comment type="domain">
    <text evidence="1">Has 3 domains, the large (RuvB-L) and small ATPase (RuvB-S) domains and the C-terminal head (RuvB-H) domain. The head domain binds DNA, while the ATPase domains jointly bind ATP, ADP or are empty depending on the state of the subunit in the translocation cycle. During a single DNA translocation step the structure of each domain remains the same, but their relative positions change.</text>
</comment>
<comment type="similarity">
    <text evidence="1">Belongs to the RuvB family.</text>
</comment>
<evidence type="ECO:0000255" key="1">
    <source>
        <dbReference type="HAMAP-Rule" id="MF_00016"/>
    </source>
</evidence>
<evidence type="ECO:0000256" key="2">
    <source>
        <dbReference type="SAM" id="MobiDB-lite"/>
    </source>
</evidence>
<gene>
    <name evidence="1" type="primary">ruvB</name>
    <name type="ordered locus">BBta_6906</name>
</gene>
<sequence>MKPPARMVSPERRSDDVGDTALRPQQLSEFVGQQQARANLSIFIEAARKRGEALDHVLFVGPPGLGKTTLAQIVARELGVGFRATSGPVIAKAGDLAALLTNLEERDVLFIDEIHRLSPAVEEVLYPAMEDFQLDLIIGEGPAARSVKIDLAKFTLVGATTRAGLLTNPLRDRFGIPIRLNFYTVEELEGIVTRGARVLGVGMTADGANEIARRARGTPRIAGRLLRRVRDFASAANADAIDRAIADHALSALEVDAAGLDAMDRRYLTTIALNYGGGPVGVETMAAALSEPRDAIEDIIEPYLIQCGYLQRTPRGRLLTSHAFRHLGMAEPSRDASQFGLFGSEDDA</sequence>
<dbReference type="EC" id="3.6.4.-" evidence="1"/>
<dbReference type="EMBL" id="CP000494">
    <property type="protein sequence ID" value="ABQ38793.1"/>
    <property type="molecule type" value="Genomic_DNA"/>
</dbReference>
<dbReference type="RefSeq" id="WP_012046727.1">
    <property type="nucleotide sequence ID" value="NC_009485.1"/>
</dbReference>
<dbReference type="SMR" id="A5ERJ9"/>
<dbReference type="STRING" id="288000.BBta_6906"/>
<dbReference type="KEGG" id="bbt:BBta_6906"/>
<dbReference type="eggNOG" id="COG2255">
    <property type="taxonomic scope" value="Bacteria"/>
</dbReference>
<dbReference type="HOGENOM" id="CLU_055599_1_0_5"/>
<dbReference type="OrthoDB" id="9804478at2"/>
<dbReference type="Proteomes" id="UP000000246">
    <property type="component" value="Chromosome"/>
</dbReference>
<dbReference type="GO" id="GO:0005737">
    <property type="term" value="C:cytoplasm"/>
    <property type="evidence" value="ECO:0007669"/>
    <property type="project" value="UniProtKB-SubCell"/>
</dbReference>
<dbReference type="GO" id="GO:0048476">
    <property type="term" value="C:Holliday junction resolvase complex"/>
    <property type="evidence" value="ECO:0007669"/>
    <property type="project" value="UniProtKB-UniRule"/>
</dbReference>
<dbReference type="GO" id="GO:0005524">
    <property type="term" value="F:ATP binding"/>
    <property type="evidence" value="ECO:0007669"/>
    <property type="project" value="UniProtKB-UniRule"/>
</dbReference>
<dbReference type="GO" id="GO:0016887">
    <property type="term" value="F:ATP hydrolysis activity"/>
    <property type="evidence" value="ECO:0007669"/>
    <property type="project" value="InterPro"/>
</dbReference>
<dbReference type="GO" id="GO:0000400">
    <property type="term" value="F:four-way junction DNA binding"/>
    <property type="evidence" value="ECO:0007669"/>
    <property type="project" value="UniProtKB-UniRule"/>
</dbReference>
<dbReference type="GO" id="GO:0009378">
    <property type="term" value="F:four-way junction helicase activity"/>
    <property type="evidence" value="ECO:0007669"/>
    <property type="project" value="InterPro"/>
</dbReference>
<dbReference type="GO" id="GO:0006310">
    <property type="term" value="P:DNA recombination"/>
    <property type="evidence" value="ECO:0007669"/>
    <property type="project" value="UniProtKB-UniRule"/>
</dbReference>
<dbReference type="GO" id="GO:0006281">
    <property type="term" value="P:DNA repair"/>
    <property type="evidence" value="ECO:0007669"/>
    <property type="project" value="UniProtKB-UniRule"/>
</dbReference>
<dbReference type="CDD" id="cd00009">
    <property type="entry name" value="AAA"/>
    <property type="match status" value="1"/>
</dbReference>
<dbReference type="FunFam" id="3.40.50.300:FF:000073">
    <property type="entry name" value="Holliday junction ATP-dependent DNA helicase RuvB"/>
    <property type="match status" value="1"/>
</dbReference>
<dbReference type="Gene3D" id="1.10.8.60">
    <property type="match status" value="1"/>
</dbReference>
<dbReference type="Gene3D" id="3.40.50.300">
    <property type="entry name" value="P-loop containing nucleotide triphosphate hydrolases"/>
    <property type="match status" value="1"/>
</dbReference>
<dbReference type="Gene3D" id="1.10.10.10">
    <property type="entry name" value="Winged helix-like DNA-binding domain superfamily/Winged helix DNA-binding domain"/>
    <property type="match status" value="1"/>
</dbReference>
<dbReference type="HAMAP" id="MF_00016">
    <property type="entry name" value="DNA_HJ_migration_RuvB"/>
    <property type="match status" value="1"/>
</dbReference>
<dbReference type="InterPro" id="IPR003593">
    <property type="entry name" value="AAA+_ATPase"/>
</dbReference>
<dbReference type="InterPro" id="IPR041445">
    <property type="entry name" value="AAA_lid_4"/>
</dbReference>
<dbReference type="InterPro" id="IPR004605">
    <property type="entry name" value="DNA_helicase_Holl-junc_RuvB"/>
</dbReference>
<dbReference type="InterPro" id="IPR027417">
    <property type="entry name" value="P-loop_NTPase"/>
</dbReference>
<dbReference type="InterPro" id="IPR008824">
    <property type="entry name" value="RuvB-like_N"/>
</dbReference>
<dbReference type="InterPro" id="IPR008823">
    <property type="entry name" value="RuvB_C"/>
</dbReference>
<dbReference type="InterPro" id="IPR036388">
    <property type="entry name" value="WH-like_DNA-bd_sf"/>
</dbReference>
<dbReference type="InterPro" id="IPR036390">
    <property type="entry name" value="WH_DNA-bd_sf"/>
</dbReference>
<dbReference type="NCBIfam" id="NF000868">
    <property type="entry name" value="PRK00080.1"/>
    <property type="match status" value="1"/>
</dbReference>
<dbReference type="NCBIfam" id="TIGR00635">
    <property type="entry name" value="ruvB"/>
    <property type="match status" value="1"/>
</dbReference>
<dbReference type="PANTHER" id="PTHR42848">
    <property type="match status" value="1"/>
</dbReference>
<dbReference type="PANTHER" id="PTHR42848:SF1">
    <property type="entry name" value="HOLLIDAY JUNCTION BRANCH MIGRATION COMPLEX SUBUNIT RUVB"/>
    <property type="match status" value="1"/>
</dbReference>
<dbReference type="Pfam" id="PF17864">
    <property type="entry name" value="AAA_lid_4"/>
    <property type="match status" value="1"/>
</dbReference>
<dbReference type="Pfam" id="PF05491">
    <property type="entry name" value="RuvB_C"/>
    <property type="match status" value="1"/>
</dbReference>
<dbReference type="Pfam" id="PF05496">
    <property type="entry name" value="RuvB_N"/>
    <property type="match status" value="1"/>
</dbReference>
<dbReference type="SMART" id="SM00382">
    <property type="entry name" value="AAA"/>
    <property type="match status" value="1"/>
</dbReference>
<dbReference type="SUPFAM" id="SSF52540">
    <property type="entry name" value="P-loop containing nucleoside triphosphate hydrolases"/>
    <property type="match status" value="1"/>
</dbReference>
<dbReference type="SUPFAM" id="SSF46785">
    <property type="entry name" value="Winged helix' DNA-binding domain"/>
    <property type="match status" value="1"/>
</dbReference>
<protein>
    <recommendedName>
        <fullName evidence="1">Holliday junction branch migration complex subunit RuvB</fullName>
        <ecNumber evidence="1">3.6.4.-</ecNumber>
    </recommendedName>
</protein>
<keyword id="KW-0067">ATP-binding</keyword>
<keyword id="KW-0963">Cytoplasm</keyword>
<keyword id="KW-0227">DNA damage</keyword>
<keyword id="KW-0233">DNA recombination</keyword>
<keyword id="KW-0234">DNA repair</keyword>
<keyword id="KW-0238">DNA-binding</keyword>
<keyword id="KW-0378">Hydrolase</keyword>
<keyword id="KW-0547">Nucleotide-binding</keyword>
<keyword id="KW-1185">Reference proteome</keyword>
<proteinExistence type="inferred from homology"/>